<accession>A9MPV6</accession>
<protein>
    <recommendedName>
        <fullName evidence="1">Glycerol-3-phosphate acyltransferase</fullName>
    </recommendedName>
    <alternativeName>
        <fullName evidence="1">G3P acyltransferase</fullName>
        <shortName evidence="1">GPAT</shortName>
        <ecNumber evidence="1">2.3.1.15</ecNumber>
        <ecNumber evidence="1">2.3.1.n5</ecNumber>
    </alternativeName>
    <alternativeName>
        <fullName evidence="1">Lysophosphatidic acid synthase</fullName>
        <shortName evidence="1">LPA synthase</shortName>
    </alternativeName>
</protein>
<organism>
    <name type="scientific">Salmonella arizonae (strain ATCC BAA-731 / CDC346-86 / RSK2980)</name>
    <dbReference type="NCBI Taxonomy" id="41514"/>
    <lineage>
        <taxon>Bacteria</taxon>
        <taxon>Pseudomonadati</taxon>
        <taxon>Pseudomonadota</taxon>
        <taxon>Gammaproteobacteria</taxon>
        <taxon>Enterobacterales</taxon>
        <taxon>Enterobacteriaceae</taxon>
        <taxon>Salmonella</taxon>
    </lineage>
</organism>
<feature type="chain" id="PRO_1000084392" description="Glycerol-3-phosphate acyltransferase">
    <location>
        <begin position="1"/>
        <end position="205"/>
    </location>
</feature>
<feature type="topological domain" description="Periplasmic" evidence="1">
    <location>
        <begin position="1"/>
        <end position="3"/>
    </location>
</feature>
<feature type="transmembrane region" description="Helical" evidence="1">
    <location>
        <begin position="4"/>
        <end position="24"/>
    </location>
</feature>
<feature type="topological domain" description="Cytoplasmic" evidence="1">
    <location>
        <begin position="25"/>
        <end position="52"/>
    </location>
</feature>
<feature type="transmembrane region" description="Helical" evidence="1">
    <location>
        <begin position="53"/>
        <end position="73"/>
    </location>
</feature>
<feature type="topological domain" description="Periplasmic" evidence="1">
    <location>
        <begin position="74"/>
        <end position="80"/>
    </location>
</feature>
<feature type="transmembrane region" description="Helical" evidence="1">
    <location>
        <begin position="81"/>
        <end position="101"/>
    </location>
</feature>
<feature type="topological domain" description="Cytoplasmic" evidence="1">
    <location>
        <begin position="102"/>
        <end position="111"/>
    </location>
</feature>
<feature type="transmembrane region" description="Helical" evidence="1">
    <location>
        <begin position="112"/>
        <end position="132"/>
    </location>
</feature>
<feature type="topological domain" description="Periplasmic" evidence="1">
    <location>
        <begin position="133"/>
        <end position="137"/>
    </location>
</feature>
<feature type="transmembrane region" description="Helical" evidence="1">
    <location>
        <begin position="138"/>
        <end position="158"/>
    </location>
</feature>
<feature type="topological domain" description="Cytoplasmic" evidence="1">
    <location>
        <begin position="159"/>
        <end position="205"/>
    </location>
</feature>
<keyword id="KW-0997">Cell inner membrane</keyword>
<keyword id="KW-1003">Cell membrane</keyword>
<keyword id="KW-0444">Lipid biosynthesis</keyword>
<keyword id="KW-0443">Lipid metabolism</keyword>
<keyword id="KW-0472">Membrane</keyword>
<keyword id="KW-0594">Phospholipid biosynthesis</keyword>
<keyword id="KW-1208">Phospholipid metabolism</keyword>
<keyword id="KW-1185">Reference proteome</keyword>
<keyword id="KW-0808">Transferase</keyword>
<keyword id="KW-0812">Transmembrane</keyword>
<keyword id="KW-1133">Transmembrane helix</keyword>
<proteinExistence type="inferred from homology"/>
<name>PLSY_SALAR</name>
<evidence type="ECO:0000255" key="1">
    <source>
        <dbReference type="HAMAP-Rule" id="MF_01043"/>
    </source>
</evidence>
<reference key="1">
    <citation type="submission" date="2007-11" db="EMBL/GenBank/DDBJ databases">
        <authorList>
            <consortium name="The Salmonella enterica serovar Arizonae Genome Sequencing Project"/>
            <person name="McClelland M."/>
            <person name="Sanderson E.K."/>
            <person name="Porwollik S."/>
            <person name="Spieth J."/>
            <person name="Clifton W.S."/>
            <person name="Fulton R."/>
            <person name="Chunyan W."/>
            <person name="Wollam A."/>
            <person name="Shah N."/>
            <person name="Pepin K."/>
            <person name="Bhonagiri V."/>
            <person name="Nash W."/>
            <person name="Johnson M."/>
            <person name="Thiruvilangam P."/>
            <person name="Wilson R."/>
        </authorList>
    </citation>
    <scope>NUCLEOTIDE SEQUENCE [LARGE SCALE GENOMIC DNA]</scope>
    <source>
        <strain>ATCC BAA-731 / CDC346-86 / RSK2980</strain>
    </source>
</reference>
<dbReference type="EC" id="2.3.1.15" evidence="1"/>
<dbReference type="EC" id="2.3.1.n5" evidence="1"/>
<dbReference type="EMBL" id="CP000880">
    <property type="protein sequence ID" value="ABX24199.1"/>
    <property type="molecule type" value="Genomic_DNA"/>
</dbReference>
<dbReference type="SMR" id="A9MPV6"/>
<dbReference type="STRING" id="41514.SARI_04422"/>
<dbReference type="KEGG" id="ses:SARI_04422"/>
<dbReference type="HOGENOM" id="CLU_081254_0_2_6"/>
<dbReference type="UniPathway" id="UPA00085"/>
<dbReference type="Proteomes" id="UP000002084">
    <property type="component" value="Chromosome"/>
</dbReference>
<dbReference type="GO" id="GO:0005886">
    <property type="term" value="C:plasma membrane"/>
    <property type="evidence" value="ECO:0007669"/>
    <property type="project" value="UniProtKB-SubCell"/>
</dbReference>
<dbReference type="GO" id="GO:0043772">
    <property type="term" value="F:acyl-phosphate glycerol-3-phosphate acyltransferase activity"/>
    <property type="evidence" value="ECO:0007669"/>
    <property type="project" value="InterPro"/>
</dbReference>
<dbReference type="GO" id="GO:0004366">
    <property type="term" value="F:glycerol-3-phosphate O-acyltransferase activity"/>
    <property type="evidence" value="ECO:0007669"/>
    <property type="project" value="UniProtKB-UniRule"/>
</dbReference>
<dbReference type="GO" id="GO:0008654">
    <property type="term" value="P:phospholipid biosynthetic process"/>
    <property type="evidence" value="ECO:0007669"/>
    <property type="project" value="UniProtKB-UniRule"/>
</dbReference>
<dbReference type="HAMAP" id="MF_01043">
    <property type="entry name" value="PlsY"/>
    <property type="match status" value="1"/>
</dbReference>
<dbReference type="InterPro" id="IPR003811">
    <property type="entry name" value="G3P_acylTferase_PlsY"/>
</dbReference>
<dbReference type="NCBIfam" id="TIGR00023">
    <property type="entry name" value="glycerol-3-phosphate 1-O-acyltransferase PlsY"/>
    <property type="match status" value="1"/>
</dbReference>
<dbReference type="PANTHER" id="PTHR30309:SF0">
    <property type="entry name" value="GLYCEROL-3-PHOSPHATE ACYLTRANSFERASE-RELATED"/>
    <property type="match status" value="1"/>
</dbReference>
<dbReference type="PANTHER" id="PTHR30309">
    <property type="entry name" value="INNER MEMBRANE PROTEIN YGIH"/>
    <property type="match status" value="1"/>
</dbReference>
<dbReference type="Pfam" id="PF02660">
    <property type="entry name" value="G3P_acyltransf"/>
    <property type="match status" value="1"/>
</dbReference>
<dbReference type="SMART" id="SM01207">
    <property type="entry name" value="G3P_acyltransf"/>
    <property type="match status" value="1"/>
</dbReference>
<sequence>MSAIAPGMILFAYLCGSISSAILVCRIAGLPDPRESGSGNPGATNVLRIGGKGAAVAVLIFDILKGMLPVWGAYALGITPFWLGLIAIAACLGHIWPVFFGFKGGKGVATAFGAIAPIGWDLTGVIAGTWLLTVLLSGYSSLGAIVSALIAPFYVWWFKPQFTFPVSMLSCLILLRHHDNIQRLWRRQETKIWTKLKKKREKESK</sequence>
<gene>
    <name evidence="1" type="primary">plsY</name>
    <name type="synonym">ygiH</name>
    <name type="ordered locus">SARI_04422</name>
</gene>
<comment type="function">
    <text evidence="1">Catalyzes the transfer of an acyl group from acyl-ACP to glycerol-3-phosphate (G3P) to form lysophosphatidic acid (LPA). This enzyme can also utilize acyl-CoA as fatty acyl donor, but not acyl-PO(4).</text>
</comment>
<comment type="catalytic activity">
    <reaction evidence="1">
        <text>sn-glycerol 3-phosphate + an acyl-CoA = a 1-acyl-sn-glycero-3-phosphate + CoA</text>
        <dbReference type="Rhea" id="RHEA:15325"/>
        <dbReference type="ChEBI" id="CHEBI:57287"/>
        <dbReference type="ChEBI" id="CHEBI:57597"/>
        <dbReference type="ChEBI" id="CHEBI:57970"/>
        <dbReference type="ChEBI" id="CHEBI:58342"/>
        <dbReference type="EC" id="2.3.1.15"/>
    </reaction>
</comment>
<comment type="catalytic activity">
    <reaction evidence="1">
        <text>a fatty acyl-[ACP] + sn-glycerol 3-phosphate = a 1-acyl-sn-glycero-3-phosphate + holo-[ACP]</text>
        <dbReference type="Rhea" id="RHEA:42300"/>
        <dbReference type="Rhea" id="RHEA-COMP:9685"/>
        <dbReference type="Rhea" id="RHEA-COMP:14125"/>
        <dbReference type="ChEBI" id="CHEBI:57597"/>
        <dbReference type="ChEBI" id="CHEBI:57970"/>
        <dbReference type="ChEBI" id="CHEBI:64479"/>
        <dbReference type="ChEBI" id="CHEBI:138651"/>
        <dbReference type="EC" id="2.3.1.n5"/>
    </reaction>
</comment>
<comment type="pathway">
    <text evidence="1">Lipid metabolism; phospholipid metabolism.</text>
</comment>
<comment type="subunit">
    <text evidence="1">Probably interacts with PlsX.</text>
</comment>
<comment type="subcellular location">
    <subcellularLocation>
        <location evidence="1">Cell inner membrane</location>
        <topology evidence="1">Multi-pass membrane protein</topology>
    </subcellularLocation>
</comment>
<comment type="similarity">
    <text evidence="1">Belongs to the PlsY family.</text>
</comment>